<reference key="1">
    <citation type="journal article" date="2006" name="J. Bacteriol.">
        <title>Comparison of the genome sequence of the poultry pathogen Bordetella avium with those of B. bronchiseptica, B. pertussis, and B. parapertussis reveals extensive diversity in surface structures associated with host interaction.</title>
        <authorList>
            <person name="Sebaihia M."/>
            <person name="Preston A."/>
            <person name="Maskell D.J."/>
            <person name="Kuzmiak H."/>
            <person name="Connell T.D."/>
            <person name="King N.D."/>
            <person name="Orndorff P.E."/>
            <person name="Miyamoto D.M."/>
            <person name="Thomson N.R."/>
            <person name="Harris D."/>
            <person name="Goble A."/>
            <person name="Lord A."/>
            <person name="Murphy L."/>
            <person name="Quail M.A."/>
            <person name="Rutter S."/>
            <person name="Squares R."/>
            <person name="Squares S."/>
            <person name="Woodward J."/>
            <person name="Parkhill J."/>
            <person name="Temple L.M."/>
        </authorList>
    </citation>
    <scope>NUCLEOTIDE SEQUENCE [LARGE SCALE GENOMIC DNA]</scope>
    <source>
        <strain>197N</strain>
    </source>
</reference>
<proteinExistence type="inferred from homology"/>
<evidence type="ECO:0000255" key="1">
    <source>
        <dbReference type="HAMAP-Rule" id="MF_00823"/>
    </source>
</evidence>
<evidence type="ECO:0000255" key="2">
    <source>
        <dbReference type="PROSITE-ProRule" id="PRU01137"/>
    </source>
</evidence>
<name>ACCA_BORA1</name>
<feature type="chain" id="PRO_1000062581" description="Acetyl-coenzyme A carboxylase carboxyl transferase subunit alpha">
    <location>
        <begin position="1"/>
        <end position="321"/>
    </location>
</feature>
<feature type="domain" description="CoA carboxyltransferase C-terminal" evidence="2">
    <location>
        <begin position="39"/>
        <end position="293"/>
    </location>
</feature>
<keyword id="KW-0067">ATP-binding</keyword>
<keyword id="KW-0963">Cytoplasm</keyword>
<keyword id="KW-0275">Fatty acid biosynthesis</keyword>
<keyword id="KW-0276">Fatty acid metabolism</keyword>
<keyword id="KW-0444">Lipid biosynthesis</keyword>
<keyword id="KW-0443">Lipid metabolism</keyword>
<keyword id="KW-0547">Nucleotide-binding</keyword>
<keyword id="KW-1185">Reference proteome</keyword>
<keyword id="KW-0808">Transferase</keyword>
<gene>
    <name evidence="1" type="primary">accA</name>
    <name type="ordered locus">BAV2560</name>
</gene>
<comment type="function">
    <text evidence="1">Component of the acetyl coenzyme A carboxylase (ACC) complex. First, biotin carboxylase catalyzes the carboxylation of biotin on its carrier protein (BCCP) and then the CO(2) group is transferred by the carboxyltransferase to acetyl-CoA to form malonyl-CoA.</text>
</comment>
<comment type="catalytic activity">
    <reaction evidence="1">
        <text>N(6)-carboxybiotinyl-L-lysyl-[protein] + acetyl-CoA = N(6)-biotinyl-L-lysyl-[protein] + malonyl-CoA</text>
        <dbReference type="Rhea" id="RHEA:54728"/>
        <dbReference type="Rhea" id="RHEA-COMP:10505"/>
        <dbReference type="Rhea" id="RHEA-COMP:10506"/>
        <dbReference type="ChEBI" id="CHEBI:57288"/>
        <dbReference type="ChEBI" id="CHEBI:57384"/>
        <dbReference type="ChEBI" id="CHEBI:83144"/>
        <dbReference type="ChEBI" id="CHEBI:83145"/>
        <dbReference type="EC" id="2.1.3.15"/>
    </reaction>
</comment>
<comment type="pathway">
    <text evidence="1">Lipid metabolism; malonyl-CoA biosynthesis; malonyl-CoA from acetyl-CoA: step 1/1.</text>
</comment>
<comment type="subunit">
    <text evidence="1">Acetyl-CoA carboxylase is a heterohexamer composed of biotin carboxyl carrier protein (AccB), biotin carboxylase (AccC) and two subunits each of ACCase subunit alpha (AccA) and ACCase subunit beta (AccD).</text>
</comment>
<comment type="subcellular location">
    <subcellularLocation>
        <location evidence="1">Cytoplasm</location>
    </subcellularLocation>
</comment>
<comment type="similarity">
    <text evidence="1">Belongs to the AccA family.</text>
</comment>
<dbReference type="EC" id="2.1.3.15" evidence="1"/>
<dbReference type="EMBL" id="AM167904">
    <property type="protein sequence ID" value="CAJ50170.1"/>
    <property type="molecule type" value="Genomic_DNA"/>
</dbReference>
<dbReference type="RefSeq" id="WP_012418213.1">
    <property type="nucleotide sequence ID" value="NC_010645.1"/>
</dbReference>
<dbReference type="SMR" id="Q2KX40"/>
<dbReference type="STRING" id="360910.BAV2560"/>
<dbReference type="GeneID" id="92934255"/>
<dbReference type="KEGG" id="bav:BAV2560"/>
<dbReference type="eggNOG" id="COG0825">
    <property type="taxonomic scope" value="Bacteria"/>
</dbReference>
<dbReference type="HOGENOM" id="CLU_015486_0_2_4"/>
<dbReference type="OrthoDB" id="9808023at2"/>
<dbReference type="UniPathway" id="UPA00655">
    <property type="reaction ID" value="UER00711"/>
</dbReference>
<dbReference type="Proteomes" id="UP000001977">
    <property type="component" value="Chromosome"/>
</dbReference>
<dbReference type="GO" id="GO:0009317">
    <property type="term" value="C:acetyl-CoA carboxylase complex"/>
    <property type="evidence" value="ECO:0007669"/>
    <property type="project" value="InterPro"/>
</dbReference>
<dbReference type="GO" id="GO:0003989">
    <property type="term" value="F:acetyl-CoA carboxylase activity"/>
    <property type="evidence" value="ECO:0007669"/>
    <property type="project" value="InterPro"/>
</dbReference>
<dbReference type="GO" id="GO:0005524">
    <property type="term" value="F:ATP binding"/>
    <property type="evidence" value="ECO:0007669"/>
    <property type="project" value="UniProtKB-KW"/>
</dbReference>
<dbReference type="GO" id="GO:0016743">
    <property type="term" value="F:carboxyl- or carbamoyltransferase activity"/>
    <property type="evidence" value="ECO:0007669"/>
    <property type="project" value="UniProtKB-UniRule"/>
</dbReference>
<dbReference type="GO" id="GO:0006633">
    <property type="term" value="P:fatty acid biosynthetic process"/>
    <property type="evidence" value="ECO:0007669"/>
    <property type="project" value="UniProtKB-KW"/>
</dbReference>
<dbReference type="GO" id="GO:2001295">
    <property type="term" value="P:malonyl-CoA biosynthetic process"/>
    <property type="evidence" value="ECO:0007669"/>
    <property type="project" value="UniProtKB-UniRule"/>
</dbReference>
<dbReference type="Gene3D" id="3.90.226.10">
    <property type="entry name" value="2-enoyl-CoA Hydratase, Chain A, domain 1"/>
    <property type="match status" value="1"/>
</dbReference>
<dbReference type="HAMAP" id="MF_00823">
    <property type="entry name" value="AcetylCoA_CT_alpha"/>
    <property type="match status" value="1"/>
</dbReference>
<dbReference type="InterPro" id="IPR001095">
    <property type="entry name" value="Acetyl_CoA_COase_a_su"/>
</dbReference>
<dbReference type="InterPro" id="IPR029045">
    <property type="entry name" value="ClpP/crotonase-like_dom_sf"/>
</dbReference>
<dbReference type="InterPro" id="IPR011763">
    <property type="entry name" value="COA_CT_C"/>
</dbReference>
<dbReference type="NCBIfam" id="TIGR00513">
    <property type="entry name" value="accA"/>
    <property type="match status" value="1"/>
</dbReference>
<dbReference type="NCBIfam" id="NF041504">
    <property type="entry name" value="AccA_sub"/>
    <property type="match status" value="1"/>
</dbReference>
<dbReference type="NCBIfam" id="NF004344">
    <property type="entry name" value="PRK05724.1"/>
    <property type="match status" value="1"/>
</dbReference>
<dbReference type="PANTHER" id="PTHR42853">
    <property type="entry name" value="ACETYL-COENZYME A CARBOXYLASE CARBOXYL TRANSFERASE SUBUNIT ALPHA"/>
    <property type="match status" value="1"/>
</dbReference>
<dbReference type="PANTHER" id="PTHR42853:SF3">
    <property type="entry name" value="ACETYL-COENZYME A CARBOXYLASE CARBOXYL TRANSFERASE SUBUNIT ALPHA, CHLOROPLASTIC"/>
    <property type="match status" value="1"/>
</dbReference>
<dbReference type="Pfam" id="PF03255">
    <property type="entry name" value="ACCA"/>
    <property type="match status" value="1"/>
</dbReference>
<dbReference type="PRINTS" id="PR01069">
    <property type="entry name" value="ACCCTRFRASEA"/>
</dbReference>
<dbReference type="SUPFAM" id="SSF52096">
    <property type="entry name" value="ClpP/crotonase"/>
    <property type="match status" value="1"/>
</dbReference>
<dbReference type="PROSITE" id="PS50989">
    <property type="entry name" value="COA_CT_CTER"/>
    <property type="match status" value="1"/>
</dbReference>
<accession>Q2KX40</accession>
<sequence length="321" mass="35845">MRNTFLEFEQPLAELENKIEQLRYVQADSAVDISDEIGRLQQKSQTLAKEIYGKLTPWQTALVARHPQRPYTLDYVREIFTDFHELHGDRMYADDQSIVGGLARFNGQSCMVIGHQKGRDTKERAARNFGMPRPEGYRKAQRLMRLAEKFKLPIFTFVDTPGAYPGIGAEERGQSEAIGHNLYVMAELKVPVIVTIIGEGGSGGALAIAVGNAVLMLQYSTYSVISPEGCASILWRSADKAPEAAEALAITAPRLKDLGLIDRVVNEPIGGAHRDPRVMARLLRRALGDSLRQLQDLTPEQLVEQRLERVLAYGRFQEVRG</sequence>
<organism>
    <name type="scientific">Bordetella avium (strain 197N)</name>
    <dbReference type="NCBI Taxonomy" id="360910"/>
    <lineage>
        <taxon>Bacteria</taxon>
        <taxon>Pseudomonadati</taxon>
        <taxon>Pseudomonadota</taxon>
        <taxon>Betaproteobacteria</taxon>
        <taxon>Burkholderiales</taxon>
        <taxon>Alcaligenaceae</taxon>
        <taxon>Bordetella</taxon>
    </lineage>
</organism>
<protein>
    <recommendedName>
        <fullName evidence="1">Acetyl-coenzyme A carboxylase carboxyl transferase subunit alpha</fullName>
        <shortName evidence="1">ACCase subunit alpha</shortName>
        <shortName evidence="1">Acetyl-CoA carboxylase carboxyltransferase subunit alpha</shortName>
        <ecNumber evidence="1">2.1.3.15</ecNumber>
    </recommendedName>
</protein>